<comment type="function">
    <text evidence="1">Acts as a chaperone.</text>
</comment>
<comment type="induction">
    <text evidence="1">By stress conditions e.g. heat shock.</text>
</comment>
<comment type="similarity">
    <text evidence="1">Belongs to the heat shock protein 70 family.</text>
</comment>
<evidence type="ECO:0000255" key="1">
    <source>
        <dbReference type="HAMAP-Rule" id="MF_00332"/>
    </source>
</evidence>
<evidence type="ECO:0000256" key="2">
    <source>
        <dbReference type="SAM" id="MobiDB-lite"/>
    </source>
</evidence>
<keyword id="KW-0067">ATP-binding</keyword>
<keyword id="KW-0143">Chaperone</keyword>
<keyword id="KW-0547">Nucleotide-binding</keyword>
<keyword id="KW-0597">Phosphoprotein</keyword>
<keyword id="KW-1185">Reference proteome</keyword>
<keyword id="KW-0346">Stress response</keyword>
<reference key="1">
    <citation type="journal article" date="2009" name="J. Bacteriol.">
        <title>Complete genome sequence of Macrococcus caseolyticus strain JCSCS5402, reflecting the ancestral genome of the human-pathogenic staphylococci.</title>
        <authorList>
            <person name="Baba T."/>
            <person name="Kuwahara-Arai K."/>
            <person name="Uchiyama I."/>
            <person name="Takeuchi F."/>
            <person name="Ito T."/>
            <person name="Hiramatsu K."/>
        </authorList>
    </citation>
    <scope>NUCLEOTIDE SEQUENCE [LARGE SCALE GENOMIC DNA]</scope>
    <source>
        <strain>JCSC5402</strain>
    </source>
</reference>
<gene>
    <name evidence="1" type="primary">dnaK</name>
    <name type="ordered locus">MCCL_1232</name>
</gene>
<accession>B9E6X1</accession>
<sequence length="607" mass="65402">MSKVIGIDLGTTNSCVAVLEGGEPKVIANPEGNRTTPSVVAFKNGETQVGEVAKRQAITNPNTIISIKRHMGTDYKENIEGKEYSPQEISAMILQNLKATAESYLGEKVTKAVITVPAYFNDAERQATKDAGKIAGLEVERIINEPTAAALAYGLDKTDKEQKVLVFDLGGGTFDVSILELGDGVFEVLSTSGDNKLGGDDFDQVIIDYLVEEFKKENGLDLSQDKMAMQRLKDAAEKAKKDLSGVSSTQISLPFISAGEAGPLHLEVTLSRAKFEELSHTLVERTMGPTRQAMKDAGLSNADIDEVILVGGSTRIPAVQEAIKKELGKEPNKGVNPDEVVAMGAAIQGGVITGDVKDVVLLDVTPLSLGIETMGGVSTVLIERNTTIPTSKSQVFSTAADNQPAVDIHVLQGERQMAADNKTLGRFQLTDIPPAPRGVPQIEVTFDIDKNGIVNVTAKDLGTQKEQKITIQSSSSLSDEEIDRMVKDAEANAEADKKRREEVDLRNEADQLVFATDKAIKDLEDKVDAAEKEKAEAAKEELKKALEGNDLEEIKAKKDTLNEIVQGLSMKLYEQMAQAQQGAEGAASQDDDVVDADFTEVKDDDNK</sequence>
<feature type="chain" id="PRO_1000133151" description="Chaperone protein DnaK">
    <location>
        <begin position="1"/>
        <end position="607"/>
    </location>
</feature>
<feature type="region of interest" description="Disordered" evidence="2">
    <location>
        <begin position="577"/>
        <end position="607"/>
    </location>
</feature>
<feature type="compositionally biased region" description="Low complexity" evidence="2">
    <location>
        <begin position="577"/>
        <end position="588"/>
    </location>
</feature>
<feature type="compositionally biased region" description="Acidic residues" evidence="2">
    <location>
        <begin position="589"/>
        <end position="598"/>
    </location>
</feature>
<feature type="modified residue" description="Phosphothreonine; by autocatalysis" evidence="1">
    <location>
        <position position="173"/>
    </location>
</feature>
<organism>
    <name type="scientific">Macrococcus caseolyticus (strain JCSC5402)</name>
    <name type="common">Macrococcoides caseolyticum</name>
    <dbReference type="NCBI Taxonomy" id="458233"/>
    <lineage>
        <taxon>Bacteria</taxon>
        <taxon>Bacillati</taxon>
        <taxon>Bacillota</taxon>
        <taxon>Bacilli</taxon>
        <taxon>Bacillales</taxon>
        <taxon>Staphylococcaceae</taxon>
        <taxon>Macrococcoides</taxon>
    </lineage>
</organism>
<proteinExistence type="inferred from homology"/>
<dbReference type="EMBL" id="AP009484">
    <property type="protein sequence ID" value="BAH17939.1"/>
    <property type="molecule type" value="Genomic_DNA"/>
</dbReference>
<dbReference type="RefSeq" id="WP_012657137.1">
    <property type="nucleotide sequence ID" value="NC_011999.1"/>
</dbReference>
<dbReference type="SMR" id="B9E6X1"/>
<dbReference type="STRING" id="458233.MCCL_1232"/>
<dbReference type="GeneID" id="61128877"/>
<dbReference type="KEGG" id="mcl:MCCL_1232"/>
<dbReference type="eggNOG" id="COG0443">
    <property type="taxonomic scope" value="Bacteria"/>
</dbReference>
<dbReference type="HOGENOM" id="CLU_005965_2_4_9"/>
<dbReference type="OrthoDB" id="9766019at2"/>
<dbReference type="Proteomes" id="UP000001383">
    <property type="component" value="Chromosome"/>
</dbReference>
<dbReference type="GO" id="GO:0005524">
    <property type="term" value="F:ATP binding"/>
    <property type="evidence" value="ECO:0007669"/>
    <property type="project" value="UniProtKB-UniRule"/>
</dbReference>
<dbReference type="GO" id="GO:0140662">
    <property type="term" value="F:ATP-dependent protein folding chaperone"/>
    <property type="evidence" value="ECO:0007669"/>
    <property type="project" value="InterPro"/>
</dbReference>
<dbReference type="GO" id="GO:0051082">
    <property type="term" value="F:unfolded protein binding"/>
    <property type="evidence" value="ECO:0007669"/>
    <property type="project" value="InterPro"/>
</dbReference>
<dbReference type="CDD" id="cd10234">
    <property type="entry name" value="ASKHA_NBD_HSP70_DnaK-like"/>
    <property type="match status" value="1"/>
</dbReference>
<dbReference type="FunFam" id="2.60.34.10:FF:000014">
    <property type="entry name" value="Chaperone protein DnaK HSP70"/>
    <property type="match status" value="1"/>
</dbReference>
<dbReference type="FunFam" id="1.20.1270.10:FF:000004">
    <property type="entry name" value="Molecular chaperone DnaK"/>
    <property type="match status" value="1"/>
</dbReference>
<dbReference type="FunFam" id="3.30.420.40:FF:000071">
    <property type="entry name" value="Molecular chaperone DnaK"/>
    <property type="match status" value="1"/>
</dbReference>
<dbReference type="FunFam" id="3.90.640.10:FF:000003">
    <property type="entry name" value="Molecular chaperone DnaK"/>
    <property type="match status" value="1"/>
</dbReference>
<dbReference type="Gene3D" id="1.20.1270.10">
    <property type="match status" value="1"/>
</dbReference>
<dbReference type="Gene3D" id="3.30.420.40">
    <property type="match status" value="2"/>
</dbReference>
<dbReference type="Gene3D" id="3.90.640.10">
    <property type="entry name" value="Actin, Chain A, domain 4"/>
    <property type="match status" value="1"/>
</dbReference>
<dbReference type="Gene3D" id="2.60.34.10">
    <property type="entry name" value="Substrate Binding Domain Of DNAk, Chain A, domain 1"/>
    <property type="match status" value="1"/>
</dbReference>
<dbReference type="HAMAP" id="MF_00332">
    <property type="entry name" value="DnaK"/>
    <property type="match status" value="1"/>
</dbReference>
<dbReference type="InterPro" id="IPR043129">
    <property type="entry name" value="ATPase_NBD"/>
</dbReference>
<dbReference type="InterPro" id="IPR012725">
    <property type="entry name" value="Chaperone_DnaK"/>
</dbReference>
<dbReference type="InterPro" id="IPR018181">
    <property type="entry name" value="Heat_shock_70_CS"/>
</dbReference>
<dbReference type="InterPro" id="IPR029048">
    <property type="entry name" value="HSP70_C_sf"/>
</dbReference>
<dbReference type="InterPro" id="IPR029047">
    <property type="entry name" value="HSP70_peptide-bd_sf"/>
</dbReference>
<dbReference type="InterPro" id="IPR013126">
    <property type="entry name" value="Hsp_70_fam"/>
</dbReference>
<dbReference type="NCBIfam" id="NF001413">
    <property type="entry name" value="PRK00290.1"/>
    <property type="match status" value="1"/>
</dbReference>
<dbReference type="NCBIfam" id="TIGR02350">
    <property type="entry name" value="prok_dnaK"/>
    <property type="match status" value="1"/>
</dbReference>
<dbReference type="PANTHER" id="PTHR19375">
    <property type="entry name" value="HEAT SHOCK PROTEIN 70KDA"/>
    <property type="match status" value="1"/>
</dbReference>
<dbReference type="Pfam" id="PF00012">
    <property type="entry name" value="HSP70"/>
    <property type="match status" value="1"/>
</dbReference>
<dbReference type="PRINTS" id="PR00301">
    <property type="entry name" value="HEATSHOCK70"/>
</dbReference>
<dbReference type="SUPFAM" id="SSF53067">
    <property type="entry name" value="Actin-like ATPase domain"/>
    <property type="match status" value="2"/>
</dbReference>
<dbReference type="SUPFAM" id="SSF100934">
    <property type="entry name" value="Heat shock protein 70kD (HSP70), C-terminal subdomain"/>
    <property type="match status" value="1"/>
</dbReference>
<dbReference type="SUPFAM" id="SSF100920">
    <property type="entry name" value="Heat shock protein 70kD (HSP70), peptide-binding domain"/>
    <property type="match status" value="1"/>
</dbReference>
<dbReference type="PROSITE" id="PS00297">
    <property type="entry name" value="HSP70_1"/>
    <property type="match status" value="1"/>
</dbReference>
<dbReference type="PROSITE" id="PS00329">
    <property type="entry name" value="HSP70_2"/>
    <property type="match status" value="1"/>
</dbReference>
<dbReference type="PROSITE" id="PS01036">
    <property type="entry name" value="HSP70_3"/>
    <property type="match status" value="1"/>
</dbReference>
<name>DNAK_MACCJ</name>
<protein>
    <recommendedName>
        <fullName evidence="1">Chaperone protein DnaK</fullName>
    </recommendedName>
    <alternativeName>
        <fullName evidence="1">HSP70</fullName>
    </alternativeName>
    <alternativeName>
        <fullName evidence="1">Heat shock 70 kDa protein</fullName>
    </alternativeName>
    <alternativeName>
        <fullName evidence="1">Heat shock protein 70</fullName>
    </alternativeName>
</protein>